<reference key="1">
    <citation type="submission" date="2008-01" db="EMBL/GenBank/DDBJ databases">
        <title>Complete sequence of Pseudomonas putida GB-1.</title>
        <authorList>
            <consortium name="US DOE Joint Genome Institute"/>
            <person name="Copeland A."/>
            <person name="Lucas S."/>
            <person name="Lapidus A."/>
            <person name="Barry K."/>
            <person name="Glavina del Rio T."/>
            <person name="Dalin E."/>
            <person name="Tice H."/>
            <person name="Pitluck S."/>
            <person name="Bruce D."/>
            <person name="Goodwin L."/>
            <person name="Chertkov O."/>
            <person name="Brettin T."/>
            <person name="Detter J.C."/>
            <person name="Han C."/>
            <person name="Kuske C.R."/>
            <person name="Schmutz J."/>
            <person name="Larimer F."/>
            <person name="Land M."/>
            <person name="Hauser L."/>
            <person name="Kyrpides N."/>
            <person name="Kim E."/>
            <person name="McCarthy J.K."/>
            <person name="Richardson P."/>
        </authorList>
    </citation>
    <scope>NUCLEOTIDE SEQUENCE [LARGE SCALE GENOMIC DNA]</scope>
    <source>
        <strain>GB-1</strain>
    </source>
</reference>
<organism>
    <name type="scientific">Pseudomonas putida (strain GB-1)</name>
    <dbReference type="NCBI Taxonomy" id="76869"/>
    <lineage>
        <taxon>Bacteria</taxon>
        <taxon>Pseudomonadati</taxon>
        <taxon>Pseudomonadota</taxon>
        <taxon>Gammaproteobacteria</taxon>
        <taxon>Pseudomonadales</taxon>
        <taxon>Pseudomonadaceae</taxon>
        <taxon>Pseudomonas</taxon>
    </lineage>
</organism>
<sequence>MTQISERLLVQAHLDAKQPNPLTAEQEAEYRAAIAAELKAQNAVLVAHYYCDPVIQALAEETGGCVSDSLEMARFGKNHPAETVIVAGVRFMGETAKILTPEKRVLMPTLEATCSLDLGCPVEEFSAFCDQHPERTVVVYANTSAAVKARADWVVTSSCALEIVESLMDNGETIIWGPDQHLGRYIQKQTGADMLLWDGACIVHEEFKSRQLADMKALYPDAAILVHPESPEAVIELADAVGSTSQLIKAAQTLPNKTFIVATDRGIFYKMQQLCPDKEFVEAPTAGNGAACRSCAHCPWMAMNTLERVLDCLRKGGDEIFVDPALVPKAIKPLNRMLDFTQAARLKLSGNA</sequence>
<gene>
    <name evidence="1" type="primary">nadA</name>
    <name type="ordered locus">PputGB1_4187</name>
</gene>
<comment type="function">
    <text evidence="1">Catalyzes the condensation of iminoaspartate with dihydroxyacetone phosphate to form quinolinate.</text>
</comment>
<comment type="catalytic activity">
    <reaction evidence="1">
        <text>iminosuccinate + dihydroxyacetone phosphate = quinolinate + phosphate + 2 H2O + H(+)</text>
        <dbReference type="Rhea" id="RHEA:25888"/>
        <dbReference type="ChEBI" id="CHEBI:15377"/>
        <dbReference type="ChEBI" id="CHEBI:15378"/>
        <dbReference type="ChEBI" id="CHEBI:29959"/>
        <dbReference type="ChEBI" id="CHEBI:43474"/>
        <dbReference type="ChEBI" id="CHEBI:57642"/>
        <dbReference type="ChEBI" id="CHEBI:77875"/>
        <dbReference type="EC" id="2.5.1.72"/>
    </reaction>
    <physiologicalReaction direction="left-to-right" evidence="1">
        <dbReference type="Rhea" id="RHEA:25889"/>
    </physiologicalReaction>
</comment>
<comment type="cofactor">
    <cofactor evidence="1">
        <name>[4Fe-4S] cluster</name>
        <dbReference type="ChEBI" id="CHEBI:49883"/>
    </cofactor>
    <text evidence="1">Binds 1 [4Fe-4S] cluster per subunit.</text>
</comment>
<comment type="pathway">
    <text evidence="1">Cofactor biosynthesis; NAD(+) biosynthesis; quinolinate from iminoaspartate: step 1/1.</text>
</comment>
<comment type="subcellular location">
    <subcellularLocation>
        <location evidence="1">Cytoplasm</location>
    </subcellularLocation>
</comment>
<comment type="similarity">
    <text evidence="1">Belongs to the quinolinate synthase family. Type 1 subfamily.</text>
</comment>
<keyword id="KW-0004">4Fe-4S</keyword>
<keyword id="KW-0963">Cytoplasm</keyword>
<keyword id="KW-0408">Iron</keyword>
<keyword id="KW-0411">Iron-sulfur</keyword>
<keyword id="KW-0479">Metal-binding</keyword>
<keyword id="KW-0662">Pyridine nucleotide biosynthesis</keyword>
<keyword id="KW-0808">Transferase</keyword>
<name>NADA_PSEPG</name>
<feature type="chain" id="PRO_1000082313" description="Quinolinate synthase">
    <location>
        <begin position="1"/>
        <end position="352"/>
    </location>
</feature>
<feature type="binding site" evidence="1">
    <location>
        <position position="48"/>
    </location>
    <ligand>
        <name>iminosuccinate</name>
        <dbReference type="ChEBI" id="CHEBI:77875"/>
    </ligand>
</feature>
<feature type="binding site" evidence="1">
    <location>
        <position position="69"/>
    </location>
    <ligand>
        <name>iminosuccinate</name>
        <dbReference type="ChEBI" id="CHEBI:77875"/>
    </ligand>
</feature>
<feature type="binding site" evidence="1">
    <location>
        <position position="114"/>
    </location>
    <ligand>
        <name>[4Fe-4S] cluster</name>
        <dbReference type="ChEBI" id="CHEBI:49883"/>
    </ligand>
</feature>
<feature type="binding site" evidence="1">
    <location>
        <begin position="140"/>
        <end position="142"/>
    </location>
    <ligand>
        <name>iminosuccinate</name>
        <dbReference type="ChEBI" id="CHEBI:77875"/>
    </ligand>
</feature>
<feature type="binding site" evidence="1">
    <location>
        <position position="157"/>
    </location>
    <ligand>
        <name>iminosuccinate</name>
        <dbReference type="ChEBI" id="CHEBI:77875"/>
    </ligand>
</feature>
<feature type="binding site" evidence="1">
    <location>
        <position position="201"/>
    </location>
    <ligand>
        <name>[4Fe-4S] cluster</name>
        <dbReference type="ChEBI" id="CHEBI:49883"/>
    </ligand>
</feature>
<feature type="binding site" evidence="1">
    <location>
        <begin position="227"/>
        <end position="229"/>
    </location>
    <ligand>
        <name>iminosuccinate</name>
        <dbReference type="ChEBI" id="CHEBI:77875"/>
    </ligand>
</feature>
<feature type="binding site" evidence="1">
    <location>
        <position position="244"/>
    </location>
    <ligand>
        <name>iminosuccinate</name>
        <dbReference type="ChEBI" id="CHEBI:77875"/>
    </ligand>
</feature>
<feature type="binding site" evidence="1">
    <location>
        <position position="298"/>
    </location>
    <ligand>
        <name>[4Fe-4S] cluster</name>
        <dbReference type="ChEBI" id="CHEBI:49883"/>
    </ligand>
</feature>
<protein>
    <recommendedName>
        <fullName evidence="1">Quinolinate synthase</fullName>
        <ecNumber evidence="1">2.5.1.72</ecNumber>
    </recommendedName>
</protein>
<dbReference type="EC" id="2.5.1.72" evidence="1"/>
<dbReference type="EMBL" id="CP000926">
    <property type="protein sequence ID" value="ABZ00076.1"/>
    <property type="molecule type" value="Genomic_DNA"/>
</dbReference>
<dbReference type="RefSeq" id="WP_012273754.1">
    <property type="nucleotide sequence ID" value="NC_010322.1"/>
</dbReference>
<dbReference type="SMR" id="B0KTH8"/>
<dbReference type="KEGG" id="ppg:PputGB1_4187"/>
<dbReference type="eggNOG" id="COG0379">
    <property type="taxonomic scope" value="Bacteria"/>
</dbReference>
<dbReference type="HOGENOM" id="CLU_047382_1_0_6"/>
<dbReference type="UniPathway" id="UPA00253">
    <property type="reaction ID" value="UER00327"/>
</dbReference>
<dbReference type="Proteomes" id="UP000002157">
    <property type="component" value="Chromosome"/>
</dbReference>
<dbReference type="GO" id="GO:0005829">
    <property type="term" value="C:cytosol"/>
    <property type="evidence" value="ECO:0007669"/>
    <property type="project" value="TreeGrafter"/>
</dbReference>
<dbReference type="GO" id="GO:0051539">
    <property type="term" value="F:4 iron, 4 sulfur cluster binding"/>
    <property type="evidence" value="ECO:0007669"/>
    <property type="project" value="UniProtKB-KW"/>
</dbReference>
<dbReference type="GO" id="GO:0046872">
    <property type="term" value="F:metal ion binding"/>
    <property type="evidence" value="ECO:0007669"/>
    <property type="project" value="UniProtKB-KW"/>
</dbReference>
<dbReference type="GO" id="GO:0008987">
    <property type="term" value="F:quinolinate synthetase A activity"/>
    <property type="evidence" value="ECO:0007669"/>
    <property type="project" value="UniProtKB-UniRule"/>
</dbReference>
<dbReference type="GO" id="GO:0034628">
    <property type="term" value="P:'de novo' NAD biosynthetic process from L-aspartate"/>
    <property type="evidence" value="ECO:0007669"/>
    <property type="project" value="TreeGrafter"/>
</dbReference>
<dbReference type="FunFam" id="3.40.50.10800:FF:000001">
    <property type="entry name" value="Quinolinate synthase A"/>
    <property type="match status" value="1"/>
</dbReference>
<dbReference type="FunFam" id="3.40.50.10800:FF:000003">
    <property type="entry name" value="Quinolinate synthase A"/>
    <property type="match status" value="1"/>
</dbReference>
<dbReference type="Gene3D" id="3.40.50.10800">
    <property type="entry name" value="NadA-like"/>
    <property type="match status" value="3"/>
</dbReference>
<dbReference type="HAMAP" id="MF_00567">
    <property type="entry name" value="NadA_type1"/>
    <property type="match status" value="1"/>
</dbReference>
<dbReference type="InterPro" id="IPR003473">
    <property type="entry name" value="NadA"/>
</dbReference>
<dbReference type="InterPro" id="IPR036094">
    <property type="entry name" value="NadA_sf"/>
</dbReference>
<dbReference type="InterPro" id="IPR023513">
    <property type="entry name" value="Quinolinate_synth_A_type1"/>
</dbReference>
<dbReference type="NCBIfam" id="TIGR00550">
    <property type="entry name" value="nadA"/>
    <property type="match status" value="1"/>
</dbReference>
<dbReference type="NCBIfam" id="NF006877">
    <property type="entry name" value="PRK09375.1-1"/>
    <property type="match status" value="1"/>
</dbReference>
<dbReference type="NCBIfam" id="NF006878">
    <property type="entry name" value="PRK09375.1-2"/>
    <property type="match status" value="1"/>
</dbReference>
<dbReference type="PANTHER" id="PTHR30573:SF0">
    <property type="entry name" value="QUINOLINATE SYNTHASE, CHLOROPLASTIC"/>
    <property type="match status" value="1"/>
</dbReference>
<dbReference type="PANTHER" id="PTHR30573">
    <property type="entry name" value="QUINOLINATE SYNTHETASE A"/>
    <property type="match status" value="1"/>
</dbReference>
<dbReference type="Pfam" id="PF02445">
    <property type="entry name" value="NadA"/>
    <property type="match status" value="1"/>
</dbReference>
<dbReference type="SUPFAM" id="SSF142754">
    <property type="entry name" value="NadA-like"/>
    <property type="match status" value="1"/>
</dbReference>
<evidence type="ECO:0000255" key="1">
    <source>
        <dbReference type="HAMAP-Rule" id="MF_00567"/>
    </source>
</evidence>
<accession>B0KTH8</accession>
<proteinExistence type="inferred from homology"/>